<sequence>MVSTKVKPTTTTTPTTTVNKTTQPTTTTTASKKVKQTKQSKAQAKEIQELASTPSVKQIQSQKVLVPKLEETKPITPPDQEEEDQEEEEQEQEEEENENNDNNTGNVSEKELGISKESIEFSNLPIEENTKKSIEEMGFKKMTPIQAKSILPLLEGKDLLGAARTGSGKTLAFLIPAIEVLVKSNFKPRNGTGVIIISPTRELALQIYGVARELMKYHTQTHGIVIGGASKKPEEERLEKGVNLLVATPGRLLDHLQNTKGFITKNLKCLIIDEADRILEVGFEEEMHQIIKKVPKTRQTMLFSATQTRKVDDIAKVSLNNSPVYVGVDDEREISTVEGLEQGYVVCPSERRFLLLYTFLKKNLSKKIIVFLSSCNAVKYTAELLNYIDIPVLELHGRQKQQKRTNTFYEFVNAEKGILICTDVAARGLDIPSVDWIIQYDPPDDPKEYIHRVGRTARGVGKKGRALLFLLPKELGFLKYLKLAKVPLNEYEFPKSKIANVQDQLEKVVSQNFYLYNSARDAYKAYICAYASHSLKDIFDVNALDLQCVAKAFGFLDPPKVNLNVNSSGKADFQKKSNNKSGFAQKQYGSKFPPKDGRQFDR</sequence>
<protein>
    <recommendedName>
        <fullName>Probable ATP-dependent RNA helicase ddx18</fullName>
        <ecNumber>3.6.4.13</ecNumber>
    </recommendedName>
    <alternativeName>
        <fullName>DEAD box protein 18</fullName>
    </alternativeName>
</protein>
<proteinExistence type="inferred from homology"/>
<name>DDX18_DICDI</name>
<organism>
    <name type="scientific">Dictyostelium discoideum</name>
    <name type="common">Social amoeba</name>
    <dbReference type="NCBI Taxonomy" id="44689"/>
    <lineage>
        <taxon>Eukaryota</taxon>
        <taxon>Amoebozoa</taxon>
        <taxon>Evosea</taxon>
        <taxon>Eumycetozoa</taxon>
        <taxon>Dictyostelia</taxon>
        <taxon>Dictyosteliales</taxon>
        <taxon>Dictyosteliaceae</taxon>
        <taxon>Dictyostelium</taxon>
    </lineage>
</organism>
<accession>Q54S03</accession>
<gene>
    <name type="primary">ddx18</name>
    <name type="ORF">DDB_G0282741</name>
</gene>
<evidence type="ECO:0000250" key="1"/>
<evidence type="ECO:0000250" key="2">
    <source>
        <dbReference type="UniProtKB" id="Q9NVP1"/>
    </source>
</evidence>
<evidence type="ECO:0000255" key="3">
    <source>
        <dbReference type="PROSITE-ProRule" id="PRU00541"/>
    </source>
</evidence>
<evidence type="ECO:0000255" key="4">
    <source>
        <dbReference type="PROSITE-ProRule" id="PRU00542"/>
    </source>
</evidence>
<evidence type="ECO:0000256" key="5">
    <source>
        <dbReference type="SAM" id="MobiDB-lite"/>
    </source>
</evidence>
<evidence type="ECO:0000305" key="6"/>
<reference key="1">
    <citation type="journal article" date="2005" name="Nature">
        <title>The genome of the social amoeba Dictyostelium discoideum.</title>
        <authorList>
            <person name="Eichinger L."/>
            <person name="Pachebat J.A."/>
            <person name="Gloeckner G."/>
            <person name="Rajandream M.A."/>
            <person name="Sucgang R."/>
            <person name="Berriman M."/>
            <person name="Song J."/>
            <person name="Olsen R."/>
            <person name="Szafranski K."/>
            <person name="Xu Q."/>
            <person name="Tunggal B."/>
            <person name="Kummerfeld S."/>
            <person name="Madera M."/>
            <person name="Konfortov B.A."/>
            <person name="Rivero F."/>
            <person name="Bankier A.T."/>
            <person name="Lehmann R."/>
            <person name="Hamlin N."/>
            <person name="Davies R."/>
            <person name="Gaudet P."/>
            <person name="Fey P."/>
            <person name="Pilcher K."/>
            <person name="Chen G."/>
            <person name="Saunders D."/>
            <person name="Sodergren E.J."/>
            <person name="Davis P."/>
            <person name="Kerhornou A."/>
            <person name="Nie X."/>
            <person name="Hall N."/>
            <person name="Anjard C."/>
            <person name="Hemphill L."/>
            <person name="Bason N."/>
            <person name="Farbrother P."/>
            <person name="Desany B."/>
            <person name="Just E."/>
            <person name="Morio T."/>
            <person name="Rost R."/>
            <person name="Churcher C.M."/>
            <person name="Cooper J."/>
            <person name="Haydock S."/>
            <person name="van Driessche N."/>
            <person name="Cronin A."/>
            <person name="Goodhead I."/>
            <person name="Muzny D.M."/>
            <person name="Mourier T."/>
            <person name="Pain A."/>
            <person name="Lu M."/>
            <person name="Harper D."/>
            <person name="Lindsay R."/>
            <person name="Hauser H."/>
            <person name="James K.D."/>
            <person name="Quiles M."/>
            <person name="Madan Babu M."/>
            <person name="Saito T."/>
            <person name="Buchrieser C."/>
            <person name="Wardroper A."/>
            <person name="Felder M."/>
            <person name="Thangavelu M."/>
            <person name="Johnson D."/>
            <person name="Knights A."/>
            <person name="Loulseged H."/>
            <person name="Mungall K.L."/>
            <person name="Oliver K."/>
            <person name="Price C."/>
            <person name="Quail M.A."/>
            <person name="Urushihara H."/>
            <person name="Hernandez J."/>
            <person name="Rabbinowitsch E."/>
            <person name="Steffen D."/>
            <person name="Sanders M."/>
            <person name="Ma J."/>
            <person name="Kohara Y."/>
            <person name="Sharp S."/>
            <person name="Simmonds M.N."/>
            <person name="Spiegler S."/>
            <person name="Tivey A."/>
            <person name="Sugano S."/>
            <person name="White B."/>
            <person name="Walker D."/>
            <person name="Woodward J.R."/>
            <person name="Winckler T."/>
            <person name="Tanaka Y."/>
            <person name="Shaulsky G."/>
            <person name="Schleicher M."/>
            <person name="Weinstock G.M."/>
            <person name="Rosenthal A."/>
            <person name="Cox E.C."/>
            <person name="Chisholm R.L."/>
            <person name="Gibbs R.A."/>
            <person name="Loomis W.F."/>
            <person name="Platzer M."/>
            <person name="Kay R.R."/>
            <person name="Williams J.G."/>
            <person name="Dear P.H."/>
            <person name="Noegel A.A."/>
            <person name="Barrell B.G."/>
            <person name="Kuspa A."/>
        </authorList>
    </citation>
    <scope>NUCLEOTIDE SEQUENCE [LARGE SCALE GENOMIC DNA]</scope>
    <source>
        <strain>AX4</strain>
    </source>
</reference>
<comment type="function">
    <text evidence="1">ATP-binding RNA helicase which may be involved in the ribosome biogenesis.</text>
</comment>
<comment type="catalytic activity">
    <reaction>
        <text>ATP + H2O = ADP + phosphate + H(+)</text>
        <dbReference type="Rhea" id="RHEA:13065"/>
        <dbReference type="ChEBI" id="CHEBI:15377"/>
        <dbReference type="ChEBI" id="CHEBI:15378"/>
        <dbReference type="ChEBI" id="CHEBI:30616"/>
        <dbReference type="ChEBI" id="CHEBI:43474"/>
        <dbReference type="ChEBI" id="CHEBI:456216"/>
        <dbReference type="EC" id="3.6.4.13"/>
    </reaction>
</comment>
<comment type="subcellular location">
    <subcellularLocation>
        <location evidence="2">Nucleus</location>
        <location evidence="2">Nucleolus</location>
    </subcellularLocation>
    <subcellularLocation>
        <location evidence="2">Chromosome</location>
    </subcellularLocation>
</comment>
<comment type="domain">
    <text>The Q motif is unique to and characteristic of the DEAD box family of RNA helicases and controls ATP binding and hydrolysis.</text>
</comment>
<comment type="similarity">
    <text evidence="6">Belongs to the DEAD box helicase family. DDX18/HAS1 subfamily.</text>
</comment>
<keyword id="KW-0067">ATP-binding</keyword>
<keyword id="KW-0158">Chromosome</keyword>
<keyword id="KW-0347">Helicase</keyword>
<keyword id="KW-0378">Hydrolase</keyword>
<keyword id="KW-0547">Nucleotide-binding</keyword>
<keyword id="KW-0539">Nucleus</keyword>
<keyword id="KW-1185">Reference proteome</keyword>
<keyword id="KW-0690">Ribosome biogenesis</keyword>
<keyword id="KW-0694">RNA-binding</keyword>
<keyword id="KW-0698">rRNA processing</keyword>
<dbReference type="EC" id="3.6.4.13"/>
<dbReference type="EMBL" id="AAFI02000047">
    <property type="protein sequence ID" value="EAL66230.1"/>
    <property type="molecule type" value="Genomic_DNA"/>
</dbReference>
<dbReference type="RefSeq" id="XP_640236.1">
    <property type="nucleotide sequence ID" value="XM_635144.1"/>
</dbReference>
<dbReference type="SMR" id="Q54S03"/>
<dbReference type="FunCoup" id="Q54S03">
    <property type="interactions" value="890"/>
</dbReference>
<dbReference type="STRING" id="44689.Q54S03"/>
<dbReference type="GlyGen" id="Q54S03">
    <property type="glycosylation" value="1 site"/>
</dbReference>
<dbReference type="PaxDb" id="44689-DDB0234194"/>
<dbReference type="EnsemblProtists" id="EAL66230">
    <property type="protein sequence ID" value="EAL66230"/>
    <property type="gene ID" value="DDB_G0282741"/>
</dbReference>
<dbReference type="GeneID" id="8623775"/>
<dbReference type="KEGG" id="ddi:DDB_G0282741"/>
<dbReference type="dictyBase" id="DDB_G0282741">
    <property type="gene designation" value="ddx18"/>
</dbReference>
<dbReference type="VEuPathDB" id="AmoebaDB:DDB_G0282741"/>
<dbReference type="eggNOG" id="KOG0342">
    <property type="taxonomic scope" value="Eukaryota"/>
</dbReference>
<dbReference type="HOGENOM" id="CLU_003041_26_5_1"/>
<dbReference type="InParanoid" id="Q54S03"/>
<dbReference type="OMA" id="LMEFHSQ"/>
<dbReference type="PhylomeDB" id="Q54S03"/>
<dbReference type="PRO" id="PR:Q54S03"/>
<dbReference type="Proteomes" id="UP000002195">
    <property type="component" value="Chromosome 3"/>
</dbReference>
<dbReference type="GO" id="GO:0005694">
    <property type="term" value="C:chromosome"/>
    <property type="evidence" value="ECO:0000250"/>
    <property type="project" value="UniProtKB"/>
</dbReference>
<dbReference type="GO" id="GO:0005730">
    <property type="term" value="C:nucleolus"/>
    <property type="evidence" value="ECO:0000318"/>
    <property type="project" value="GO_Central"/>
</dbReference>
<dbReference type="GO" id="GO:0005524">
    <property type="term" value="F:ATP binding"/>
    <property type="evidence" value="ECO:0007669"/>
    <property type="project" value="UniProtKB-KW"/>
</dbReference>
<dbReference type="GO" id="GO:0016887">
    <property type="term" value="F:ATP hydrolysis activity"/>
    <property type="evidence" value="ECO:0007669"/>
    <property type="project" value="RHEA"/>
</dbReference>
<dbReference type="GO" id="GO:0003723">
    <property type="term" value="F:RNA binding"/>
    <property type="evidence" value="ECO:0007669"/>
    <property type="project" value="UniProtKB-KW"/>
</dbReference>
<dbReference type="GO" id="GO:0003724">
    <property type="term" value="F:RNA helicase activity"/>
    <property type="evidence" value="ECO:0007669"/>
    <property type="project" value="UniProtKB-EC"/>
</dbReference>
<dbReference type="GO" id="GO:0000463">
    <property type="term" value="P:maturation of LSU-rRNA from tricistronic rRNA transcript (SSU-rRNA, 5.8S rRNA, LSU-rRNA)"/>
    <property type="evidence" value="ECO:0000318"/>
    <property type="project" value="GO_Central"/>
</dbReference>
<dbReference type="CDD" id="cd17942">
    <property type="entry name" value="DEADc_DDX18"/>
    <property type="match status" value="1"/>
</dbReference>
<dbReference type="CDD" id="cd18787">
    <property type="entry name" value="SF2_C_DEAD"/>
    <property type="match status" value="1"/>
</dbReference>
<dbReference type="FunFam" id="3.40.50.300:FF:000379">
    <property type="entry name" value="RNA helicase"/>
    <property type="match status" value="1"/>
</dbReference>
<dbReference type="FunFam" id="3.40.50.300:FF:000460">
    <property type="entry name" value="RNA helicase"/>
    <property type="match status" value="1"/>
</dbReference>
<dbReference type="Gene3D" id="3.40.50.300">
    <property type="entry name" value="P-loop containing nucleotide triphosphate hydrolases"/>
    <property type="match status" value="2"/>
</dbReference>
<dbReference type="InterPro" id="IPR044773">
    <property type="entry name" value="DDX18/Has1_DEADc"/>
</dbReference>
<dbReference type="InterPro" id="IPR011545">
    <property type="entry name" value="DEAD/DEAH_box_helicase_dom"/>
</dbReference>
<dbReference type="InterPro" id="IPR014001">
    <property type="entry name" value="Helicase_ATP-bd"/>
</dbReference>
<dbReference type="InterPro" id="IPR001650">
    <property type="entry name" value="Helicase_C-like"/>
</dbReference>
<dbReference type="InterPro" id="IPR027417">
    <property type="entry name" value="P-loop_NTPase"/>
</dbReference>
<dbReference type="InterPro" id="IPR000629">
    <property type="entry name" value="RNA-helicase_DEAD-box_CS"/>
</dbReference>
<dbReference type="InterPro" id="IPR014014">
    <property type="entry name" value="RNA_helicase_DEAD_Q_motif"/>
</dbReference>
<dbReference type="InterPro" id="IPR025313">
    <property type="entry name" value="SPB4-like_CTE"/>
</dbReference>
<dbReference type="PANTHER" id="PTHR24031">
    <property type="entry name" value="RNA HELICASE"/>
    <property type="match status" value="1"/>
</dbReference>
<dbReference type="Pfam" id="PF13959">
    <property type="entry name" value="CTE_SPB4"/>
    <property type="match status" value="1"/>
</dbReference>
<dbReference type="Pfam" id="PF00270">
    <property type="entry name" value="DEAD"/>
    <property type="match status" value="1"/>
</dbReference>
<dbReference type="Pfam" id="PF00271">
    <property type="entry name" value="Helicase_C"/>
    <property type="match status" value="1"/>
</dbReference>
<dbReference type="SMART" id="SM00487">
    <property type="entry name" value="DEXDc"/>
    <property type="match status" value="1"/>
</dbReference>
<dbReference type="SMART" id="SM01178">
    <property type="entry name" value="DUF4217"/>
    <property type="match status" value="1"/>
</dbReference>
<dbReference type="SMART" id="SM00490">
    <property type="entry name" value="HELICc"/>
    <property type="match status" value="1"/>
</dbReference>
<dbReference type="SUPFAM" id="SSF52540">
    <property type="entry name" value="P-loop containing nucleoside triphosphate hydrolases"/>
    <property type="match status" value="1"/>
</dbReference>
<dbReference type="PROSITE" id="PS00039">
    <property type="entry name" value="DEAD_ATP_HELICASE"/>
    <property type="match status" value="1"/>
</dbReference>
<dbReference type="PROSITE" id="PS51192">
    <property type="entry name" value="HELICASE_ATP_BIND_1"/>
    <property type="match status" value="1"/>
</dbReference>
<dbReference type="PROSITE" id="PS51194">
    <property type="entry name" value="HELICASE_CTER"/>
    <property type="match status" value="1"/>
</dbReference>
<dbReference type="PROSITE" id="PS51195">
    <property type="entry name" value="Q_MOTIF"/>
    <property type="match status" value="1"/>
</dbReference>
<feature type="chain" id="PRO_0000327432" description="Probable ATP-dependent RNA helicase ddx18">
    <location>
        <begin position="1"/>
        <end position="602"/>
    </location>
</feature>
<feature type="domain" description="Helicase ATP-binding" evidence="3">
    <location>
        <begin position="150"/>
        <end position="325"/>
    </location>
</feature>
<feature type="domain" description="Helicase C-terminal" evidence="4">
    <location>
        <begin position="339"/>
        <end position="509"/>
    </location>
</feature>
<feature type="region of interest" description="Disordered" evidence="5">
    <location>
        <begin position="1"/>
        <end position="108"/>
    </location>
</feature>
<feature type="region of interest" description="Disordered" evidence="5">
    <location>
        <begin position="568"/>
        <end position="602"/>
    </location>
</feature>
<feature type="short sequence motif" description="Q motif">
    <location>
        <begin position="119"/>
        <end position="147"/>
    </location>
</feature>
<feature type="short sequence motif" description="DEAD box">
    <location>
        <begin position="273"/>
        <end position="276"/>
    </location>
</feature>
<feature type="compositionally biased region" description="Low complexity" evidence="5">
    <location>
        <begin position="1"/>
        <end position="31"/>
    </location>
</feature>
<feature type="compositionally biased region" description="Polar residues" evidence="5">
    <location>
        <begin position="50"/>
        <end position="63"/>
    </location>
</feature>
<feature type="compositionally biased region" description="Acidic residues" evidence="5">
    <location>
        <begin position="79"/>
        <end position="99"/>
    </location>
</feature>
<feature type="compositionally biased region" description="Polar residues" evidence="5">
    <location>
        <begin position="579"/>
        <end position="588"/>
    </location>
</feature>
<feature type="compositionally biased region" description="Basic and acidic residues" evidence="5">
    <location>
        <begin position="593"/>
        <end position="602"/>
    </location>
</feature>
<feature type="binding site" evidence="3">
    <location>
        <begin position="163"/>
        <end position="170"/>
    </location>
    <ligand>
        <name>ATP</name>
        <dbReference type="ChEBI" id="CHEBI:30616"/>
    </ligand>
</feature>